<dbReference type="EMBL" id="AE017283">
    <property type="protein sequence ID" value="AAT83240.1"/>
    <property type="molecule type" value="Genomic_DNA"/>
</dbReference>
<dbReference type="RefSeq" id="WP_002516995.1">
    <property type="nucleotide sequence ID" value="NZ_CP025935.1"/>
</dbReference>
<dbReference type="SMR" id="Q6A7M5"/>
<dbReference type="EnsemblBacteria" id="AAT83240">
    <property type="protein sequence ID" value="AAT83240"/>
    <property type="gene ID" value="PPA1493"/>
</dbReference>
<dbReference type="KEGG" id="pac:PPA1493"/>
<dbReference type="eggNOG" id="COG0532">
    <property type="taxonomic scope" value="Bacteria"/>
</dbReference>
<dbReference type="HOGENOM" id="CLU_006301_9_0_11"/>
<dbReference type="Proteomes" id="UP000000603">
    <property type="component" value="Chromosome"/>
</dbReference>
<dbReference type="GO" id="GO:0005829">
    <property type="term" value="C:cytosol"/>
    <property type="evidence" value="ECO:0007669"/>
    <property type="project" value="TreeGrafter"/>
</dbReference>
<dbReference type="GO" id="GO:0005525">
    <property type="term" value="F:GTP binding"/>
    <property type="evidence" value="ECO:0007669"/>
    <property type="project" value="UniProtKB-KW"/>
</dbReference>
<dbReference type="GO" id="GO:0003924">
    <property type="term" value="F:GTPase activity"/>
    <property type="evidence" value="ECO:0007669"/>
    <property type="project" value="UniProtKB-UniRule"/>
</dbReference>
<dbReference type="GO" id="GO:0003743">
    <property type="term" value="F:translation initiation factor activity"/>
    <property type="evidence" value="ECO:0007669"/>
    <property type="project" value="UniProtKB-UniRule"/>
</dbReference>
<dbReference type="CDD" id="cd01887">
    <property type="entry name" value="IF2_eIF5B"/>
    <property type="match status" value="1"/>
</dbReference>
<dbReference type="CDD" id="cd03702">
    <property type="entry name" value="IF2_mtIF2_II"/>
    <property type="match status" value="1"/>
</dbReference>
<dbReference type="CDD" id="cd03692">
    <property type="entry name" value="mtIF2_IVc"/>
    <property type="match status" value="1"/>
</dbReference>
<dbReference type="FunFam" id="2.40.30.10:FF:000007">
    <property type="entry name" value="Translation initiation factor IF-2"/>
    <property type="match status" value="1"/>
</dbReference>
<dbReference type="FunFam" id="2.40.30.10:FF:000008">
    <property type="entry name" value="Translation initiation factor IF-2"/>
    <property type="match status" value="1"/>
</dbReference>
<dbReference type="FunFam" id="3.40.50.10050:FF:000001">
    <property type="entry name" value="Translation initiation factor IF-2"/>
    <property type="match status" value="1"/>
</dbReference>
<dbReference type="FunFam" id="3.40.50.300:FF:000019">
    <property type="entry name" value="Translation initiation factor IF-2"/>
    <property type="match status" value="1"/>
</dbReference>
<dbReference type="Gene3D" id="1.10.10.2480">
    <property type="match status" value="1"/>
</dbReference>
<dbReference type="Gene3D" id="3.40.50.300">
    <property type="entry name" value="P-loop containing nucleotide triphosphate hydrolases"/>
    <property type="match status" value="1"/>
</dbReference>
<dbReference type="Gene3D" id="2.40.30.10">
    <property type="entry name" value="Translation factors"/>
    <property type="match status" value="2"/>
</dbReference>
<dbReference type="Gene3D" id="3.40.50.10050">
    <property type="entry name" value="Translation initiation factor IF- 2, domain 3"/>
    <property type="match status" value="1"/>
</dbReference>
<dbReference type="HAMAP" id="MF_00100_B">
    <property type="entry name" value="IF_2_B"/>
    <property type="match status" value="1"/>
</dbReference>
<dbReference type="InterPro" id="IPR053905">
    <property type="entry name" value="EF-G-like_DII"/>
</dbReference>
<dbReference type="InterPro" id="IPR004161">
    <property type="entry name" value="EFTu-like_2"/>
</dbReference>
<dbReference type="InterPro" id="IPR044145">
    <property type="entry name" value="IF2_II"/>
</dbReference>
<dbReference type="InterPro" id="IPR006847">
    <property type="entry name" value="IF2_N"/>
</dbReference>
<dbReference type="InterPro" id="IPR027417">
    <property type="entry name" value="P-loop_NTPase"/>
</dbReference>
<dbReference type="InterPro" id="IPR005225">
    <property type="entry name" value="Small_GTP-bd"/>
</dbReference>
<dbReference type="InterPro" id="IPR000795">
    <property type="entry name" value="T_Tr_GTP-bd_dom"/>
</dbReference>
<dbReference type="InterPro" id="IPR000178">
    <property type="entry name" value="TF_IF2_bacterial-like"/>
</dbReference>
<dbReference type="InterPro" id="IPR015760">
    <property type="entry name" value="TIF_IF2"/>
</dbReference>
<dbReference type="InterPro" id="IPR023115">
    <property type="entry name" value="TIF_IF2_dom3"/>
</dbReference>
<dbReference type="InterPro" id="IPR036925">
    <property type="entry name" value="TIF_IF2_dom3_sf"/>
</dbReference>
<dbReference type="InterPro" id="IPR009000">
    <property type="entry name" value="Transl_B-barrel_sf"/>
</dbReference>
<dbReference type="NCBIfam" id="TIGR00487">
    <property type="entry name" value="IF-2"/>
    <property type="match status" value="1"/>
</dbReference>
<dbReference type="NCBIfam" id="TIGR00231">
    <property type="entry name" value="small_GTP"/>
    <property type="match status" value="1"/>
</dbReference>
<dbReference type="PANTHER" id="PTHR43381:SF5">
    <property type="entry name" value="TR-TYPE G DOMAIN-CONTAINING PROTEIN"/>
    <property type="match status" value="1"/>
</dbReference>
<dbReference type="PANTHER" id="PTHR43381">
    <property type="entry name" value="TRANSLATION INITIATION FACTOR IF-2-RELATED"/>
    <property type="match status" value="1"/>
</dbReference>
<dbReference type="Pfam" id="PF22042">
    <property type="entry name" value="EF-G_D2"/>
    <property type="match status" value="1"/>
</dbReference>
<dbReference type="Pfam" id="PF00009">
    <property type="entry name" value="GTP_EFTU"/>
    <property type="match status" value="1"/>
</dbReference>
<dbReference type="Pfam" id="PF03144">
    <property type="entry name" value="GTP_EFTU_D2"/>
    <property type="match status" value="1"/>
</dbReference>
<dbReference type="Pfam" id="PF11987">
    <property type="entry name" value="IF-2"/>
    <property type="match status" value="1"/>
</dbReference>
<dbReference type="Pfam" id="PF04760">
    <property type="entry name" value="IF2_N"/>
    <property type="match status" value="2"/>
</dbReference>
<dbReference type="PRINTS" id="PR00315">
    <property type="entry name" value="ELONGATNFCT"/>
</dbReference>
<dbReference type="SUPFAM" id="SSF52156">
    <property type="entry name" value="Initiation factor IF2/eIF5b, domain 3"/>
    <property type="match status" value="1"/>
</dbReference>
<dbReference type="SUPFAM" id="SSF52540">
    <property type="entry name" value="P-loop containing nucleoside triphosphate hydrolases"/>
    <property type="match status" value="1"/>
</dbReference>
<dbReference type="SUPFAM" id="SSF50447">
    <property type="entry name" value="Translation proteins"/>
    <property type="match status" value="2"/>
</dbReference>
<dbReference type="PROSITE" id="PS51722">
    <property type="entry name" value="G_TR_2"/>
    <property type="match status" value="1"/>
</dbReference>
<protein>
    <recommendedName>
        <fullName evidence="2">Translation initiation factor IF-2</fullName>
    </recommendedName>
</protein>
<organism>
    <name type="scientific">Cutibacterium acnes (strain DSM 16379 / KPA171202)</name>
    <name type="common">Propionibacterium acnes</name>
    <dbReference type="NCBI Taxonomy" id="267747"/>
    <lineage>
        <taxon>Bacteria</taxon>
        <taxon>Bacillati</taxon>
        <taxon>Actinomycetota</taxon>
        <taxon>Actinomycetes</taxon>
        <taxon>Propionibacteriales</taxon>
        <taxon>Propionibacteriaceae</taxon>
        <taxon>Cutibacterium</taxon>
    </lineage>
</organism>
<proteinExistence type="inferred from homology"/>
<sequence>MAKVRVYELAKELGLSSKQLLGKLNDMGEFVRSASSTIEAPVVRRLRDQIGSAEPADDAKAAKPAARKSQTSSKKTSKETTTAKPAPGPKPGPGPKPTPGPRPGSSSGPKPGRSSAARTSATPRPGLIKSSGASSQQEPPAAKPESKPTPKPGQNVPKPHAPAPKPKPGAPSKSPKPGARPGPRPGGSAGLPSAARPGPRPGAGRRTGAPRPGNNPFASSQGMGQSRHRSEGGQRSGGSRSGQGERMPRPGGSQGSRGGSGMPRPNPAMMPKHQSSQIGQATTGRGGRGGGRGRGGSRGSGFGGGFGGGPRGPIGGGRGGRGGRGTQGAFGRGGGGRRGRKSRKQRRQEFDEMQAPLVGGVRVRKGNGETVRLRRGASLTDLAEKINAEPAQLVQVLFNLGEMVTATQSVSDDTLEILGGELNYQIQVVSPEDEDRELLESFDLEFGEDEGDDSDLVARPPVVTVMGHVDHGKTKLLDALRHTDVVKGEAGGITQAIGAYQVQTEVDDAERAITFIDTPGHEAFTAMRARGAQSTDIAVLVVAADDGVMPQTVEALNHAKAADVPIVVAVNKIDKPEADPDKVRGQLTEYGLVPEEYGGDTMFVNVSARTHEGLDDLLEAIVLTADAALDLRANPDMAAQGVAIEAHLDKGRGPVATALIQRGTLHIGDSIVAGSSYGRVRAMINDQGESVDEAAPATPVQVLGLTSVPGAGDNFLVVDDDRKARQIAEKREARMRAAQQARSSRRKTLDQLFEQLEKGETEELLLILKGDGAGSVEALEDALAKIDVGDEVDLRVIDRGVGAITETNVSLAAASNAVIVGFNVRPTAHAQRMADEENVDIRYYSVIYDAIDEIEAALRGMLKPIYEEKAMGTAEIRQIFRSSKVGTIAGCMITDGTIRRHAKARLVRDGVVVQETEINTLQREKDAVTEVREGYECGLTLTNYSDIHVGDEVQCYEMVEKPRD</sequence>
<evidence type="ECO:0000250" key="1"/>
<evidence type="ECO:0000255" key="2">
    <source>
        <dbReference type="HAMAP-Rule" id="MF_00100"/>
    </source>
</evidence>
<evidence type="ECO:0000256" key="3">
    <source>
        <dbReference type="SAM" id="MobiDB-lite"/>
    </source>
</evidence>
<gene>
    <name evidence="2" type="primary">infB</name>
    <name type="ordered locus">PPA1493</name>
</gene>
<feature type="chain" id="PRO_0000228227" description="Translation initiation factor IF-2">
    <location>
        <begin position="1"/>
        <end position="964"/>
    </location>
</feature>
<feature type="domain" description="tr-type G">
    <location>
        <begin position="458"/>
        <end position="629"/>
    </location>
</feature>
<feature type="region of interest" description="Disordered" evidence="3">
    <location>
        <begin position="49"/>
        <end position="357"/>
    </location>
</feature>
<feature type="region of interest" description="G1" evidence="1">
    <location>
        <begin position="467"/>
        <end position="474"/>
    </location>
</feature>
<feature type="region of interest" description="G2" evidence="1">
    <location>
        <begin position="492"/>
        <end position="496"/>
    </location>
</feature>
<feature type="region of interest" description="G3" evidence="1">
    <location>
        <begin position="517"/>
        <end position="520"/>
    </location>
</feature>
<feature type="region of interest" description="G4" evidence="1">
    <location>
        <begin position="571"/>
        <end position="574"/>
    </location>
</feature>
<feature type="region of interest" description="G5" evidence="1">
    <location>
        <begin position="607"/>
        <end position="609"/>
    </location>
</feature>
<feature type="compositionally biased region" description="Low complexity" evidence="3">
    <location>
        <begin position="62"/>
        <end position="85"/>
    </location>
</feature>
<feature type="compositionally biased region" description="Pro residues" evidence="3">
    <location>
        <begin position="86"/>
        <end position="102"/>
    </location>
</feature>
<feature type="compositionally biased region" description="Low complexity" evidence="3">
    <location>
        <begin position="103"/>
        <end position="117"/>
    </location>
</feature>
<feature type="compositionally biased region" description="Pro residues" evidence="3">
    <location>
        <begin position="159"/>
        <end position="169"/>
    </location>
</feature>
<feature type="compositionally biased region" description="Low complexity" evidence="3">
    <location>
        <begin position="190"/>
        <end position="212"/>
    </location>
</feature>
<feature type="compositionally biased region" description="Low complexity" evidence="3">
    <location>
        <begin position="242"/>
        <end position="251"/>
    </location>
</feature>
<feature type="compositionally biased region" description="Gly residues" evidence="3">
    <location>
        <begin position="252"/>
        <end position="261"/>
    </location>
</feature>
<feature type="compositionally biased region" description="Gly residues" evidence="3">
    <location>
        <begin position="284"/>
        <end position="334"/>
    </location>
</feature>
<feature type="compositionally biased region" description="Basic residues" evidence="3">
    <location>
        <begin position="335"/>
        <end position="346"/>
    </location>
</feature>
<feature type="binding site" evidence="2">
    <location>
        <begin position="467"/>
        <end position="474"/>
    </location>
    <ligand>
        <name>GTP</name>
        <dbReference type="ChEBI" id="CHEBI:37565"/>
    </ligand>
</feature>
<feature type="binding site" evidence="2">
    <location>
        <begin position="517"/>
        <end position="521"/>
    </location>
    <ligand>
        <name>GTP</name>
        <dbReference type="ChEBI" id="CHEBI:37565"/>
    </ligand>
</feature>
<feature type="binding site" evidence="2">
    <location>
        <begin position="571"/>
        <end position="574"/>
    </location>
    <ligand>
        <name>GTP</name>
        <dbReference type="ChEBI" id="CHEBI:37565"/>
    </ligand>
</feature>
<reference key="1">
    <citation type="journal article" date="2004" name="Science">
        <title>The complete genome sequence of Propionibacterium acnes, a commensal of human skin.</title>
        <authorList>
            <person name="Brueggemann H."/>
            <person name="Henne A."/>
            <person name="Hoster F."/>
            <person name="Liesegang H."/>
            <person name="Wiezer A."/>
            <person name="Strittmatter A."/>
            <person name="Hujer S."/>
            <person name="Duerre P."/>
            <person name="Gottschalk G."/>
        </authorList>
    </citation>
    <scope>NUCLEOTIDE SEQUENCE [LARGE SCALE GENOMIC DNA]</scope>
    <source>
        <strain>DSM 16379 / KPA171202</strain>
    </source>
</reference>
<accession>Q6A7M5</accession>
<keyword id="KW-0963">Cytoplasm</keyword>
<keyword id="KW-0342">GTP-binding</keyword>
<keyword id="KW-0396">Initiation factor</keyword>
<keyword id="KW-0547">Nucleotide-binding</keyword>
<keyword id="KW-0648">Protein biosynthesis</keyword>
<comment type="function">
    <text evidence="2">One of the essential components for the initiation of protein synthesis. Protects formylmethionyl-tRNA from spontaneous hydrolysis and promotes its binding to the 30S ribosomal subunits. Also involved in the hydrolysis of GTP during the formation of the 70S ribosomal complex.</text>
</comment>
<comment type="subcellular location">
    <subcellularLocation>
        <location evidence="2">Cytoplasm</location>
    </subcellularLocation>
</comment>
<comment type="similarity">
    <text evidence="2">Belongs to the TRAFAC class translation factor GTPase superfamily. Classic translation factor GTPase family. IF-2 subfamily.</text>
</comment>
<name>IF2_CUTAK</name>